<gene>
    <name evidence="1" type="primary">thrB</name>
    <name type="ordered locus">VC0395_A1942</name>
    <name type="ordered locus">VC395_2478</name>
</gene>
<name>KHSE_VIBC3</name>
<proteinExistence type="inferred from homology"/>
<organism>
    <name type="scientific">Vibrio cholerae serotype O1 (strain ATCC 39541 / Classical Ogawa 395 / O395)</name>
    <dbReference type="NCBI Taxonomy" id="345073"/>
    <lineage>
        <taxon>Bacteria</taxon>
        <taxon>Pseudomonadati</taxon>
        <taxon>Pseudomonadota</taxon>
        <taxon>Gammaproteobacteria</taxon>
        <taxon>Vibrionales</taxon>
        <taxon>Vibrionaceae</taxon>
        <taxon>Vibrio</taxon>
    </lineage>
</organism>
<dbReference type="EC" id="2.7.1.39" evidence="1"/>
<dbReference type="EMBL" id="CP000627">
    <property type="protein sequence ID" value="ABQ19489.1"/>
    <property type="molecule type" value="Genomic_DNA"/>
</dbReference>
<dbReference type="EMBL" id="CP001235">
    <property type="protein sequence ID" value="ACP10468.1"/>
    <property type="molecule type" value="Genomic_DNA"/>
</dbReference>
<dbReference type="RefSeq" id="WP_000118016.1">
    <property type="nucleotide sequence ID" value="NZ_JAACZH010000008.1"/>
</dbReference>
<dbReference type="SMR" id="A5F5R9"/>
<dbReference type="KEGG" id="vco:VC0395_A1942"/>
<dbReference type="KEGG" id="vcr:VC395_2478"/>
<dbReference type="PATRIC" id="fig|345073.21.peg.2382"/>
<dbReference type="eggNOG" id="COG0083">
    <property type="taxonomic scope" value="Bacteria"/>
</dbReference>
<dbReference type="HOGENOM" id="CLU_041243_1_1_6"/>
<dbReference type="OrthoDB" id="9769912at2"/>
<dbReference type="UniPathway" id="UPA00050">
    <property type="reaction ID" value="UER00064"/>
</dbReference>
<dbReference type="Proteomes" id="UP000000249">
    <property type="component" value="Chromosome 2"/>
</dbReference>
<dbReference type="GO" id="GO:0005737">
    <property type="term" value="C:cytoplasm"/>
    <property type="evidence" value="ECO:0007669"/>
    <property type="project" value="UniProtKB-SubCell"/>
</dbReference>
<dbReference type="GO" id="GO:0005524">
    <property type="term" value="F:ATP binding"/>
    <property type="evidence" value="ECO:0007669"/>
    <property type="project" value="UniProtKB-UniRule"/>
</dbReference>
<dbReference type="GO" id="GO:0004413">
    <property type="term" value="F:homoserine kinase activity"/>
    <property type="evidence" value="ECO:0007669"/>
    <property type="project" value="UniProtKB-UniRule"/>
</dbReference>
<dbReference type="GO" id="GO:0009088">
    <property type="term" value="P:threonine biosynthetic process"/>
    <property type="evidence" value="ECO:0007669"/>
    <property type="project" value="UniProtKB-UniRule"/>
</dbReference>
<dbReference type="Gene3D" id="3.30.230.10">
    <property type="match status" value="1"/>
</dbReference>
<dbReference type="Gene3D" id="3.30.70.890">
    <property type="entry name" value="GHMP kinase, C-terminal domain"/>
    <property type="match status" value="1"/>
</dbReference>
<dbReference type="HAMAP" id="MF_00384">
    <property type="entry name" value="Homoser_kinase"/>
    <property type="match status" value="1"/>
</dbReference>
<dbReference type="InterPro" id="IPR013750">
    <property type="entry name" value="GHMP_kinase_C_dom"/>
</dbReference>
<dbReference type="InterPro" id="IPR036554">
    <property type="entry name" value="GHMP_kinase_C_sf"/>
</dbReference>
<dbReference type="InterPro" id="IPR006204">
    <property type="entry name" value="GHMP_kinase_N_dom"/>
</dbReference>
<dbReference type="InterPro" id="IPR006203">
    <property type="entry name" value="GHMP_knse_ATP-bd_CS"/>
</dbReference>
<dbReference type="InterPro" id="IPR000870">
    <property type="entry name" value="Homoserine_kinase"/>
</dbReference>
<dbReference type="InterPro" id="IPR020568">
    <property type="entry name" value="Ribosomal_Su5_D2-typ_SF"/>
</dbReference>
<dbReference type="InterPro" id="IPR014721">
    <property type="entry name" value="Ribsml_uS5_D2-typ_fold_subgr"/>
</dbReference>
<dbReference type="NCBIfam" id="NF002288">
    <property type="entry name" value="PRK01212.1-4"/>
    <property type="match status" value="1"/>
</dbReference>
<dbReference type="NCBIfam" id="TIGR00191">
    <property type="entry name" value="thrB"/>
    <property type="match status" value="1"/>
</dbReference>
<dbReference type="PANTHER" id="PTHR20861:SF1">
    <property type="entry name" value="HOMOSERINE KINASE"/>
    <property type="match status" value="1"/>
</dbReference>
<dbReference type="PANTHER" id="PTHR20861">
    <property type="entry name" value="HOMOSERINE/4-DIPHOSPHOCYTIDYL-2-C-METHYL-D-ERYTHRITOL KINASE"/>
    <property type="match status" value="1"/>
</dbReference>
<dbReference type="Pfam" id="PF08544">
    <property type="entry name" value="GHMP_kinases_C"/>
    <property type="match status" value="1"/>
</dbReference>
<dbReference type="Pfam" id="PF00288">
    <property type="entry name" value="GHMP_kinases_N"/>
    <property type="match status" value="1"/>
</dbReference>
<dbReference type="PIRSF" id="PIRSF000676">
    <property type="entry name" value="Homoser_kin"/>
    <property type="match status" value="1"/>
</dbReference>
<dbReference type="PRINTS" id="PR00958">
    <property type="entry name" value="HOMSERKINASE"/>
</dbReference>
<dbReference type="SUPFAM" id="SSF55060">
    <property type="entry name" value="GHMP Kinase, C-terminal domain"/>
    <property type="match status" value="1"/>
</dbReference>
<dbReference type="SUPFAM" id="SSF54211">
    <property type="entry name" value="Ribosomal protein S5 domain 2-like"/>
    <property type="match status" value="1"/>
</dbReference>
<dbReference type="PROSITE" id="PS00627">
    <property type="entry name" value="GHMP_KINASES_ATP"/>
    <property type="match status" value="1"/>
</dbReference>
<protein>
    <recommendedName>
        <fullName evidence="1">Homoserine kinase</fullName>
        <shortName evidence="1">HK</shortName>
        <shortName evidence="1">HSK</shortName>
        <ecNumber evidence="1">2.7.1.39</ecNumber>
    </recommendedName>
</protein>
<reference key="1">
    <citation type="submission" date="2007-03" db="EMBL/GenBank/DDBJ databases">
        <authorList>
            <person name="Heidelberg J."/>
        </authorList>
    </citation>
    <scope>NUCLEOTIDE SEQUENCE [LARGE SCALE GENOMIC DNA]</scope>
    <source>
        <strain>ATCC 39541 / Classical Ogawa 395 / O395</strain>
    </source>
</reference>
<reference key="2">
    <citation type="journal article" date="2008" name="PLoS ONE">
        <title>A recalibrated molecular clock and independent origins for the cholera pandemic clones.</title>
        <authorList>
            <person name="Feng L."/>
            <person name="Reeves P.R."/>
            <person name="Lan R."/>
            <person name="Ren Y."/>
            <person name="Gao C."/>
            <person name="Zhou Z."/>
            <person name="Ren Y."/>
            <person name="Cheng J."/>
            <person name="Wang W."/>
            <person name="Wang J."/>
            <person name="Qian W."/>
            <person name="Li D."/>
            <person name="Wang L."/>
        </authorList>
    </citation>
    <scope>NUCLEOTIDE SEQUENCE [LARGE SCALE GENOMIC DNA]</scope>
    <source>
        <strain>ATCC 39541 / Classical Ogawa 395 / O395</strain>
    </source>
</reference>
<comment type="function">
    <text evidence="1">Catalyzes the ATP-dependent phosphorylation of L-homoserine to L-homoserine phosphate.</text>
</comment>
<comment type="catalytic activity">
    <reaction evidence="1">
        <text>L-homoserine + ATP = O-phospho-L-homoserine + ADP + H(+)</text>
        <dbReference type="Rhea" id="RHEA:13985"/>
        <dbReference type="ChEBI" id="CHEBI:15378"/>
        <dbReference type="ChEBI" id="CHEBI:30616"/>
        <dbReference type="ChEBI" id="CHEBI:57476"/>
        <dbReference type="ChEBI" id="CHEBI:57590"/>
        <dbReference type="ChEBI" id="CHEBI:456216"/>
        <dbReference type="EC" id="2.7.1.39"/>
    </reaction>
</comment>
<comment type="pathway">
    <text evidence="1">Amino-acid biosynthesis; L-threonine biosynthesis; L-threonine from L-aspartate: step 4/5.</text>
</comment>
<comment type="subcellular location">
    <subcellularLocation>
        <location evidence="1">Cytoplasm</location>
    </subcellularLocation>
</comment>
<comment type="similarity">
    <text evidence="1">Belongs to the GHMP kinase family. Homoserine kinase subfamily.</text>
</comment>
<keyword id="KW-0028">Amino-acid biosynthesis</keyword>
<keyword id="KW-0067">ATP-binding</keyword>
<keyword id="KW-0963">Cytoplasm</keyword>
<keyword id="KW-0418">Kinase</keyword>
<keyword id="KW-0547">Nucleotide-binding</keyword>
<keyword id="KW-0791">Threonine biosynthesis</keyword>
<keyword id="KW-0808">Transferase</keyword>
<evidence type="ECO:0000255" key="1">
    <source>
        <dbReference type="HAMAP-Rule" id="MF_00384"/>
    </source>
</evidence>
<accession>A5F5R9</accession>
<accession>C3M486</accession>
<feature type="chain" id="PRO_1000072190" description="Homoserine kinase">
    <location>
        <begin position="1"/>
        <end position="318"/>
    </location>
</feature>
<feature type="binding site" evidence="1">
    <location>
        <begin position="97"/>
        <end position="107"/>
    </location>
    <ligand>
        <name>ATP</name>
        <dbReference type="ChEBI" id="CHEBI:30616"/>
    </ligand>
</feature>
<sequence>MSVVVYAPASIGNVSVGFDVLGAAVSPIDGTLLGDRVKVEAGAEAFTLKTAGRFVDKLPANPQENIVYDCWQVFARELEKKSVVLKPLTMTLEKNMPIGSGLGSSACSIVAALDALNQFHASPLDETELLALMGEMEGKISGSIHYDNVAPCYLGGVQLMLEELGIISQSVPSFDDWYWVMAYPGIKVSTAEARAILPAQYRRQDIVAHGRYLAGFIHACHTQQPELAAKMIKDVIAEPYREKLLPGFAKARSYAAAAGALATGISGSGPTLFSVCKEQAVAERVARWLEQNYVQNEEGFVHICRLDKQGSKVTGSEL</sequence>